<protein>
    <recommendedName>
        <fullName>Oxygen-independent coproporphyrinogen III oxidase</fullName>
        <shortName>CPO</shortName>
        <ecNumber evidence="3">1.3.98.3</ecNumber>
    </recommendedName>
    <alternativeName>
        <fullName>Coproporphyrinogen III dehydrogenase</fullName>
        <shortName>CPDH</shortName>
    </alternativeName>
</protein>
<sequence>MTTTFPTVEFSAELLNKYNQGIPRYTSYPPATELNKEFDPSDFQTAINLGNYKKTPLSLYCHIPFCAKACYFCGCNTIITQHKPAVDPYLKAVAKQIALVAPLVDQQRPVQQLHWGGGTPNYLTLEQAEFLFNTITDAFPLAENAEISIEINPCYVDKDYIFALRQLGFNRISFGIQDFNSQVQQAVNRIQPEAMLFQVMDWIRQANFDSVNVDLIYGLPHQNLATFRETLRKTAQLNPDRIAVFNFAYVPWLKPVQKKMPESALPPAEEKLKIMQATIADLTEQGYVFIGMDHFAKPDDELAIAQRRGELHRNFQGYTTQPESDLLGFGITSISMLQDVYAQNHKTLKAFYNALDREVMPIEKGFKLSQDDLIRRTVIKELMCQFKLSAQELESKYNLGFDCDFNDYFAKELSALDVLEADGLLRRLGDGLEVTPRGRILIRNIAAVFDTYLQNKSKQQMFSRAI</sequence>
<accession>P74132</accession>
<gene>
    <name type="primary">hemN</name>
    <name type="ordered locus">sll1876</name>
</gene>
<organism>
    <name type="scientific">Synechocystis sp. (strain ATCC 27184 / PCC 6803 / Kazusa)</name>
    <dbReference type="NCBI Taxonomy" id="1111708"/>
    <lineage>
        <taxon>Bacteria</taxon>
        <taxon>Bacillati</taxon>
        <taxon>Cyanobacteriota</taxon>
        <taxon>Cyanophyceae</taxon>
        <taxon>Synechococcales</taxon>
        <taxon>Merismopediaceae</taxon>
        <taxon>Synechocystis</taxon>
    </lineage>
</organism>
<reference key="1">
    <citation type="journal article" date="1996" name="DNA Res.">
        <title>Sequence analysis of the genome of the unicellular cyanobacterium Synechocystis sp. strain PCC6803. II. Sequence determination of the entire genome and assignment of potential protein-coding regions.</title>
        <authorList>
            <person name="Kaneko T."/>
            <person name="Sato S."/>
            <person name="Kotani H."/>
            <person name="Tanaka A."/>
            <person name="Asamizu E."/>
            <person name="Nakamura Y."/>
            <person name="Miyajima N."/>
            <person name="Hirosawa M."/>
            <person name="Sugiura M."/>
            <person name="Sasamoto S."/>
            <person name="Kimura T."/>
            <person name="Hosouchi T."/>
            <person name="Matsuno A."/>
            <person name="Muraki A."/>
            <person name="Nakazaki N."/>
            <person name="Naruo K."/>
            <person name="Okumura S."/>
            <person name="Shimpo S."/>
            <person name="Takeuchi C."/>
            <person name="Wada T."/>
            <person name="Watanabe A."/>
            <person name="Yamada M."/>
            <person name="Yasuda M."/>
            <person name="Tabata S."/>
        </authorList>
    </citation>
    <scope>NUCLEOTIDE SEQUENCE [LARGE SCALE GENOMIC DNA]</scope>
    <source>
        <strain>ATCC 27184 / PCC 6803 / Kazusa</strain>
    </source>
</reference>
<reference key="2">
    <citation type="journal article" date="2010" name="Plant Cell Physiol.">
        <title>Functional differentiation of two analogous coproporphyrinogen III oxidases for heme and chlorophyll biosynthesis pathways in the cyanobacterium Synechocystis sp. PCC 6803.</title>
        <authorList>
            <person name="Goto T."/>
            <person name="Aoki R."/>
            <person name="Minamizaki K."/>
            <person name="Fujita Y."/>
        </authorList>
    </citation>
    <scope>FUNCTION</scope>
    <scope>CATALYTIC ACTIVITY</scope>
    <scope>DISRUPTION PHENOTYPE</scope>
    <scope>INDUCTION</scope>
    <scope>COFACTOR</scope>
    <source>
        <strain>ATCC 27184 / PCC 6803 / Kazusa</strain>
    </source>
</reference>
<proteinExistence type="evidence at protein level"/>
<evidence type="ECO:0000250" key="1">
    <source>
        <dbReference type="UniProtKB" id="P32131"/>
    </source>
</evidence>
<evidence type="ECO:0000255" key="2">
    <source>
        <dbReference type="PROSITE-ProRule" id="PRU01266"/>
    </source>
</evidence>
<evidence type="ECO:0000269" key="3">
    <source>
    </source>
</evidence>
<evidence type="ECO:0000305" key="4"/>
<dbReference type="EC" id="1.3.98.3" evidence="3"/>
<dbReference type="EMBL" id="BA000022">
    <property type="protein sequence ID" value="BAA18218.1"/>
    <property type="molecule type" value="Genomic_DNA"/>
</dbReference>
<dbReference type="PIR" id="S75657">
    <property type="entry name" value="S75657"/>
</dbReference>
<dbReference type="SMR" id="P74132"/>
<dbReference type="STRING" id="1148.gene:10499091"/>
<dbReference type="PaxDb" id="1148-1653303"/>
<dbReference type="EnsemblBacteria" id="BAA18218">
    <property type="protein sequence ID" value="BAA18218"/>
    <property type="gene ID" value="BAA18218"/>
</dbReference>
<dbReference type="KEGG" id="syn:sll1876"/>
<dbReference type="eggNOG" id="COG0635">
    <property type="taxonomic scope" value="Bacteria"/>
</dbReference>
<dbReference type="InParanoid" id="P74132"/>
<dbReference type="PhylomeDB" id="P74132"/>
<dbReference type="UniPathway" id="UPA00251">
    <property type="reaction ID" value="UER00323"/>
</dbReference>
<dbReference type="Proteomes" id="UP000001425">
    <property type="component" value="Chromosome"/>
</dbReference>
<dbReference type="GO" id="GO:0005737">
    <property type="term" value="C:cytoplasm"/>
    <property type="evidence" value="ECO:0000250"/>
    <property type="project" value="UniProtKB"/>
</dbReference>
<dbReference type="GO" id="GO:0051539">
    <property type="term" value="F:4 iron, 4 sulfur cluster binding"/>
    <property type="evidence" value="ECO:0000314"/>
    <property type="project" value="UniProtKB"/>
</dbReference>
<dbReference type="GO" id="GO:0051989">
    <property type="term" value="F:coproporphyrinogen dehydrogenase activity"/>
    <property type="evidence" value="ECO:0000314"/>
    <property type="project" value="UniProtKB"/>
</dbReference>
<dbReference type="GO" id="GO:0004109">
    <property type="term" value="F:coproporphyrinogen oxidase activity"/>
    <property type="evidence" value="ECO:0007669"/>
    <property type="project" value="InterPro"/>
</dbReference>
<dbReference type="GO" id="GO:0046872">
    <property type="term" value="F:metal ion binding"/>
    <property type="evidence" value="ECO:0007669"/>
    <property type="project" value="UniProtKB-KW"/>
</dbReference>
<dbReference type="GO" id="GO:0015995">
    <property type="term" value="P:chlorophyll biosynthetic process"/>
    <property type="evidence" value="ECO:0007669"/>
    <property type="project" value="UniProtKB-KW"/>
</dbReference>
<dbReference type="GO" id="GO:0006779">
    <property type="term" value="P:porphyrin-containing compound biosynthetic process"/>
    <property type="evidence" value="ECO:0000315"/>
    <property type="project" value="UniProtKB"/>
</dbReference>
<dbReference type="GO" id="GO:0006782">
    <property type="term" value="P:protoporphyrinogen IX biosynthetic process"/>
    <property type="evidence" value="ECO:0000314"/>
    <property type="project" value="UniProtKB"/>
</dbReference>
<dbReference type="CDD" id="cd01335">
    <property type="entry name" value="Radical_SAM"/>
    <property type="match status" value="1"/>
</dbReference>
<dbReference type="FunFam" id="1.10.10.920:FF:000002">
    <property type="entry name" value="Coproporphyrinogen-III oxidase"/>
    <property type="match status" value="1"/>
</dbReference>
<dbReference type="FunFam" id="3.80.30.20:FF:000012">
    <property type="entry name" value="Coproporphyrinogen-III oxidase"/>
    <property type="match status" value="1"/>
</dbReference>
<dbReference type="Gene3D" id="1.10.10.920">
    <property type="match status" value="1"/>
</dbReference>
<dbReference type="Gene3D" id="3.80.30.20">
    <property type="entry name" value="tm_1862 like domain"/>
    <property type="match status" value="1"/>
</dbReference>
<dbReference type="InterPro" id="IPR004558">
    <property type="entry name" value="Coprogen_oxidase_HemN"/>
</dbReference>
<dbReference type="InterPro" id="IPR034505">
    <property type="entry name" value="Coproporphyrinogen-III_oxidase"/>
</dbReference>
<dbReference type="InterPro" id="IPR006638">
    <property type="entry name" value="Elp3/MiaA/NifB-like_rSAM"/>
</dbReference>
<dbReference type="InterPro" id="IPR010723">
    <property type="entry name" value="HemN_C"/>
</dbReference>
<dbReference type="InterPro" id="IPR007197">
    <property type="entry name" value="rSAM"/>
</dbReference>
<dbReference type="InterPro" id="IPR023404">
    <property type="entry name" value="rSAM_horseshoe"/>
</dbReference>
<dbReference type="NCBIfam" id="TIGR00538">
    <property type="entry name" value="hemN"/>
    <property type="match status" value="1"/>
</dbReference>
<dbReference type="PANTHER" id="PTHR13932">
    <property type="entry name" value="COPROPORPHYRINIGEN III OXIDASE"/>
    <property type="match status" value="1"/>
</dbReference>
<dbReference type="PANTHER" id="PTHR13932:SF6">
    <property type="entry name" value="OXYGEN-INDEPENDENT COPROPORPHYRINOGEN III OXIDASE"/>
    <property type="match status" value="1"/>
</dbReference>
<dbReference type="Pfam" id="PF06969">
    <property type="entry name" value="HemN_C"/>
    <property type="match status" value="1"/>
</dbReference>
<dbReference type="Pfam" id="PF04055">
    <property type="entry name" value="Radical_SAM"/>
    <property type="match status" value="1"/>
</dbReference>
<dbReference type="PIRSF" id="PIRSF000167">
    <property type="entry name" value="HemN"/>
    <property type="match status" value="1"/>
</dbReference>
<dbReference type="SFLD" id="SFLDG01065">
    <property type="entry name" value="anaerobic_coproporphyrinogen-I"/>
    <property type="match status" value="1"/>
</dbReference>
<dbReference type="SFLD" id="SFLDS00029">
    <property type="entry name" value="Radical_SAM"/>
    <property type="match status" value="1"/>
</dbReference>
<dbReference type="SMART" id="SM00729">
    <property type="entry name" value="Elp3"/>
    <property type="match status" value="1"/>
</dbReference>
<dbReference type="SUPFAM" id="SSF102114">
    <property type="entry name" value="Radical SAM enzymes"/>
    <property type="match status" value="1"/>
</dbReference>
<dbReference type="PROSITE" id="PS51918">
    <property type="entry name" value="RADICAL_SAM"/>
    <property type="match status" value="1"/>
</dbReference>
<feature type="chain" id="PRO_0000109954" description="Oxygen-independent coproporphyrinogen III oxidase">
    <location>
        <begin position="1"/>
        <end position="466"/>
    </location>
</feature>
<feature type="domain" description="Radical SAM core" evidence="2">
    <location>
        <begin position="51"/>
        <end position="285"/>
    </location>
</feature>
<feature type="binding site" evidence="1">
    <location>
        <position position="60"/>
    </location>
    <ligand>
        <name>S-adenosyl-L-methionine</name>
        <dbReference type="ChEBI" id="CHEBI:59789"/>
        <label>1</label>
    </ligand>
</feature>
<feature type="binding site" evidence="1">
    <location>
        <position position="66"/>
    </location>
    <ligand>
        <name>[4Fe-4S] cluster</name>
        <dbReference type="ChEBI" id="CHEBI:49883"/>
        <note>4Fe-4S-S-AdoMet</note>
    </ligand>
</feature>
<feature type="binding site" evidence="1">
    <location>
        <position position="70"/>
    </location>
    <ligand>
        <name>[4Fe-4S] cluster</name>
        <dbReference type="ChEBI" id="CHEBI:49883"/>
        <note>4Fe-4S-S-AdoMet</note>
    </ligand>
</feature>
<feature type="binding site" evidence="1">
    <location>
        <position position="72"/>
    </location>
    <ligand>
        <name>S-adenosyl-L-methionine</name>
        <dbReference type="ChEBI" id="CHEBI:59789"/>
        <label>2</label>
    </ligand>
</feature>
<feature type="binding site" evidence="1">
    <location>
        <position position="73"/>
    </location>
    <ligand>
        <name>[4Fe-4S] cluster</name>
        <dbReference type="ChEBI" id="CHEBI:49883"/>
        <note>4Fe-4S-S-AdoMet</note>
    </ligand>
</feature>
<feature type="binding site" evidence="1">
    <location>
        <position position="117"/>
    </location>
    <ligand>
        <name>S-adenosyl-L-methionine</name>
        <dbReference type="ChEBI" id="CHEBI:59789"/>
        <label>1</label>
    </ligand>
</feature>
<feature type="binding site" evidence="1">
    <location>
        <begin position="118"/>
        <end position="119"/>
    </location>
    <ligand>
        <name>S-adenosyl-L-methionine</name>
        <dbReference type="ChEBI" id="CHEBI:59789"/>
        <label>2</label>
    </ligand>
</feature>
<feature type="binding site" evidence="1">
    <location>
        <position position="150"/>
    </location>
    <ligand>
        <name>S-adenosyl-L-methionine</name>
        <dbReference type="ChEBI" id="CHEBI:59789"/>
        <label>1</label>
    </ligand>
</feature>
<feature type="binding site" evidence="1">
    <location>
        <position position="177"/>
    </location>
    <ligand>
        <name>S-adenosyl-L-methionine</name>
        <dbReference type="ChEBI" id="CHEBI:59789"/>
        <label>2</label>
    </ligand>
</feature>
<feature type="binding site" evidence="1">
    <location>
        <position position="189"/>
    </location>
    <ligand>
        <name>S-adenosyl-L-methionine</name>
        <dbReference type="ChEBI" id="CHEBI:59789"/>
        <label>2</label>
    </ligand>
</feature>
<feature type="binding site" evidence="1">
    <location>
        <position position="214"/>
    </location>
    <ligand>
        <name>S-adenosyl-L-methionine</name>
        <dbReference type="ChEBI" id="CHEBI:59789"/>
        <label>2</label>
    </ligand>
</feature>
<feature type="binding site" evidence="1">
    <location>
        <position position="248"/>
    </location>
    <ligand>
        <name>S-adenosyl-L-methionine</name>
        <dbReference type="ChEBI" id="CHEBI:59789"/>
        <label>2</label>
    </ligand>
</feature>
<feature type="binding site" evidence="1">
    <location>
        <position position="334"/>
    </location>
    <ligand>
        <name>S-adenosyl-L-methionine</name>
        <dbReference type="ChEBI" id="CHEBI:59789"/>
        <label>1</label>
    </ligand>
</feature>
<name>HEMN_SYNY3</name>
<comment type="function">
    <text evidence="3">Involved in the heme and chlorophyll biosynthesis. Catalyzes the anaerobic oxidative decarboxylation of propionate groups of rings A and B of coproporphyrinogen III to yield the vinyl groups in protoporphyrinogen IX.</text>
</comment>
<comment type="catalytic activity">
    <reaction evidence="3">
        <text>coproporphyrinogen III + 2 S-adenosyl-L-methionine = protoporphyrinogen IX + 2 5'-deoxyadenosine + 2 L-methionine + 2 CO2</text>
        <dbReference type="Rhea" id="RHEA:15425"/>
        <dbReference type="ChEBI" id="CHEBI:16526"/>
        <dbReference type="ChEBI" id="CHEBI:17319"/>
        <dbReference type="ChEBI" id="CHEBI:57307"/>
        <dbReference type="ChEBI" id="CHEBI:57309"/>
        <dbReference type="ChEBI" id="CHEBI:57844"/>
        <dbReference type="ChEBI" id="CHEBI:59789"/>
        <dbReference type="EC" id="1.3.98.3"/>
    </reaction>
</comment>
<comment type="cofactor">
    <cofactor evidence="1 4">
        <name>[4Fe-4S] cluster</name>
        <dbReference type="ChEBI" id="CHEBI:49883"/>
    </cofactor>
    <text evidence="1 4">Binds 1 [4Fe-4S] cluster. The cluster is coordinated with 3 cysteines and an exchangeable S-adenosyl-L-methionine.</text>
</comment>
<comment type="pathway">
    <text>Porphyrin-containing compound metabolism; protoporphyrin-IX biosynthesis; protoporphyrinogen-IX from coproporphyrinogen-III (AdoMet route): step 1/1.</text>
</comment>
<comment type="subunit">
    <text evidence="1">Monomer.</text>
</comment>
<comment type="subcellular location">
    <subcellularLocation>
        <location evidence="1">Cytoplasm</location>
    </subcellularLocation>
</comment>
<comment type="induction">
    <text evidence="3">Induced under microoxic conditions.</text>
</comment>
<comment type="disruption phenotype">
    <text evidence="3">Cells lacking this gene grow significantly slower than that of the wild-type under microoxic conditions, while they grow normally under aerobic conditions. Coproporphyrin-III is accumulated at a low but significant level in the mutant growing under microoxic conditions.</text>
</comment>
<comment type="similarity">
    <text evidence="4">Belongs to the anaerobic coproporphyrinogen-III oxidase family.</text>
</comment>
<keyword id="KW-0004">4Fe-4S</keyword>
<keyword id="KW-0149">Chlorophyll biosynthesis</keyword>
<keyword id="KW-0963">Cytoplasm</keyword>
<keyword id="KW-0408">Iron</keyword>
<keyword id="KW-0411">Iron-sulfur</keyword>
<keyword id="KW-0479">Metal-binding</keyword>
<keyword id="KW-0560">Oxidoreductase</keyword>
<keyword id="KW-0627">Porphyrin biosynthesis</keyword>
<keyword id="KW-1185">Reference proteome</keyword>
<keyword id="KW-0949">S-adenosyl-L-methionine</keyword>